<feature type="chain" id="PRO_0000316769" description="Glutamyl-tRNA(Gln) amidotransferase subunit A, mitochondrial">
    <location>
        <begin position="1"/>
        <end position="525"/>
    </location>
</feature>
<feature type="active site" description="Charge relay system" evidence="1">
    <location>
        <position position="76"/>
    </location>
</feature>
<feature type="active site" description="Charge relay system" evidence="1">
    <location>
        <position position="168"/>
    </location>
</feature>
<feature type="active site" description="Acyl-ester intermediate" evidence="1">
    <location>
        <position position="192"/>
    </location>
</feature>
<feature type="sequence conflict" description="In Ref. 1; BAE41646." evidence="2" ref="1">
    <original>D</original>
    <variation>G</variation>
    <location>
        <position position="367"/>
    </location>
</feature>
<feature type="sequence conflict" description="In Ref. 2; AAH70459." evidence="2" ref="2">
    <original>A</original>
    <variation>S</variation>
    <location>
        <position position="520"/>
    </location>
</feature>
<reference key="1">
    <citation type="journal article" date="2005" name="Science">
        <title>The transcriptional landscape of the mammalian genome.</title>
        <authorList>
            <person name="Carninci P."/>
            <person name="Kasukawa T."/>
            <person name="Katayama S."/>
            <person name="Gough J."/>
            <person name="Frith M.C."/>
            <person name="Maeda N."/>
            <person name="Oyama R."/>
            <person name="Ravasi T."/>
            <person name="Lenhard B."/>
            <person name="Wells C."/>
            <person name="Kodzius R."/>
            <person name="Shimokawa K."/>
            <person name="Bajic V.B."/>
            <person name="Brenner S.E."/>
            <person name="Batalov S."/>
            <person name="Forrest A.R."/>
            <person name="Zavolan M."/>
            <person name="Davis M.J."/>
            <person name="Wilming L.G."/>
            <person name="Aidinis V."/>
            <person name="Allen J.E."/>
            <person name="Ambesi-Impiombato A."/>
            <person name="Apweiler R."/>
            <person name="Aturaliya R.N."/>
            <person name="Bailey T.L."/>
            <person name="Bansal M."/>
            <person name="Baxter L."/>
            <person name="Beisel K.W."/>
            <person name="Bersano T."/>
            <person name="Bono H."/>
            <person name="Chalk A.M."/>
            <person name="Chiu K.P."/>
            <person name="Choudhary V."/>
            <person name="Christoffels A."/>
            <person name="Clutterbuck D.R."/>
            <person name="Crowe M.L."/>
            <person name="Dalla E."/>
            <person name="Dalrymple B.P."/>
            <person name="de Bono B."/>
            <person name="Della Gatta G."/>
            <person name="di Bernardo D."/>
            <person name="Down T."/>
            <person name="Engstrom P."/>
            <person name="Fagiolini M."/>
            <person name="Faulkner G."/>
            <person name="Fletcher C.F."/>
            <person name="Fukushima T."/>
            <person name="Furuno M."/>
            <person name="Futaki S."/>
            <person name="Gariboldi M."/>
            <person name="Georgii-Hemming P."/>
            <person name="Gingeras T.R."/>
            <person name="Gojobori T."/>
            <person name="Green R.E."/>
            <person name="Gustincich S."/>
            <person name="Harbers M."/>
            <person name="Hayashi Y."/>
            <person name="Hensch T.K."/>
            <person name="Hirokawa N."/>
            <person name="Hill D."/>
            <person name="Huminiecki L."/>
            <person name="Iacono M."/>
            <person name="Ikeo K."/>
            <person name="Iwama A."/>
            <person name="Ishikawa T."/>
            <person name="Jakt M."/>
            <person name="Kanapin A."/>
            <person name="Katoh M."/>
            <person name="Kawasawa Y."/>
            <person name="Kelso J."/>
            <person name="Kitamura H."/>
            <person name="Kitano H."/>
            <person name="Kollias G."/>
            <person name="Krishnan S.P."/>
            <person name="Kruger A."/>
            <person name="Kummerfeld S.K."/>
            <person name="Kurochkin I.V."/>
            <person name="Lareau L.F."/>
            <person name="Lazarevic D."/>
            <person name="Lipovich L."/>
            <person name="Liu J."/>
            <person name="Liuni S."/>
            <person name="McWilliam S."/>
            <person name="Madan Babu M."/>
            <person name="Madera M."/>
            <person name="Marchionni L."/>
            <person name="Matsuda H."/>
            <person name="Matsuzawa S."/>
            <person name="Miki H."/>
            <person name="Mignone F."/>
            <person name="Miyake S."/>
            <person name="Morris K."/>
            <person name="Mottagui-Tabar S."/>
            <person name="Mulder N."/>
            <person name="Nakano N."/>
            <person name="Nakauchi H."/>
            <person name="Ng P."/>
            <person name="Nilsson R."/>
            <person name="Nishiguchi S."/>
            <person name="Nishikawa S."/>
            <person name="Nori F."/>
            <person name="Ohara O."/>
            <person name="Okazaki Y."/>
            <person name="Orlando V."/>
            <person name="Pang K.C."/>
            <person name="Pavan W.J."/>
            <person name="Pavesi G."/>
            <person name="Pesole G."/>
            <person name="Petrovsky N."/>
            <person name="Piazza S."/>
            <person name="Reed J."/>
            <person name="Reid J.F."/>
            <person name="Ring B.Z."/>
            <person name="Ringwald M."/>
            <person name="Rost B."/>
            <person name="Ruan Y."/>
            <person name="Salzberg S.L."/>
            <person name="Sandelin A."/>
            <person name="Schneider C."/>
            <person name="Schoenbach C."/>
            <person name="Sekiguchi K."/>
            <person name="Semple C.A."/>
            <person name="Seno S."/>
            <person name="Sessa L."/>
            <person name="Sheng Y."/>
            <person name="Shibata Y."/>
            <person name="Shimada H."/>
            <person name="Shimada K."/>
            <person name="Silva D."/>
            <person name="Sinclair B."/>
            <person name="Sperling S."/>
            <person name="Stupka E."/>
            <person name="Sugiura K."/>
            <person name="Sultana R."/>
            <person name="Takenaka Y."/>
            <person name="Taki K."/>
            <person name="Tammoja K."/>
            <person name="Tan S.L."/>
            <person name="Tang S."/>
            <person name="Taylor M.S."/>
            <person name="Tegner J."/>
            <person name="Teichmann S.A."/>
            <person name="Ueda H.R."/>
            <person name="van Nimwegen E."/>
            <person name="Verardo R."/>
            <person name="Wei C.L."/>
            <person name="Yagi K."/>
            <person name="Yamanishi H."/>
            <person name="Zabarovsky E."/>
            <person name="Zhu S."/>
            <person name="Zimmer A."/>
            <person name="Hide W."/>
            <person name="Bult C."/>
            <person name="Grimmond S.M."/>
            <person name="Teasdale R.D."/>
            <person name="Liu E.T."/>
            <person name="Brusic V."/>
            <person name="Quackenbush J."/>
            <person name="Wahlestedt C."/>
            <person name="Mattick J.S."/>
            <person name="Hume D.A."/>
            <person name="Kai C."/>
            <person name="Sasaki D."/>
            <person name="Tomaru Y."/>
            <person name="Fukuda S."/>
            <person name="Kanamori-Katayama M."/>
            <person name="Suzuki M."/>
            <person name="Aoki J."/>
            <person name="Arakawa T."/>
            <person name="Iida J."/>
            <person name="Imamura K."/>
            <person name="Itoh M."/>
            <person name="Kato T."/>
            <person name="Kawaji H."/>
            <person name="Kawagashira N."/>
            <person name="Kawashima T."/>
            <person name="Kojima M."/>
            <person name="Kondo S."/>
            <person name="Konno H."/>
            <person name="Nakano K."/>
            <person name="Ninomiya N."/>
            <person name="Nishio T."/>
            <person name="Okada M."/>
            <person name="Plessy C."/>
            <person name="Shibata K."/>
            <person name="Shiraki T."/>
            <person name="Suzuki S."/>
            <person name="Tagami M."/>
            <person name="Waki K."/>
            <person name="Watahiki A."/>
            <person name="Okamura-Oho Y."/>
            <person name="Suzuki H."/>
            <person name="Kawai J."/>
            <person name="Hayashizaki Y."/>
        </authorList>
    </citation>
    <scope>NUCLEOTIDE SEQUENCE [LARGE SCALE MRNA]</scope>
    <source>
        <strain>C57BL/6J</strain>
        <strain>NOD</strain>
        <tissue>Embryo</tissue>
    </source>
</reference>
<reference key="2">
    <citation type="journal article" date="2004" name="Genome Res.">
        <title>The status, quality, and expansion of the NIH full-length cDNA project: the Mammalian Gene Collection (MGC).</title>
        <authorList>
            <consortium name="The MGC Project Team"/>
        </authorList>
    </citation>
    <scope>NUCLEOTIDE SEQUENCE [LARGE SCALE MRNA]</scope>
    <source>
        <strain>C57BL/6J</strain>
        <tissue>Eye</tissue>
    </source>
</reference>
<reference key="3">
    <citation type="journal article" date="2010" name="Cell">
        <title>A tissue-specific atlas of mouse protein phosphorylation and expression.</title>
        <authorList>
            <person name="Huttlin E.L."/>
            <person name="Jedrychowski M.P."/>
            <person name="Elias J.E."/>
            <person name="Goswami T."/>
            <person name="Rad R."/>
            <person name="Beausoleil S.A."/>
            <person name="Villen J."/>
            <person name="Haas W."/>
            <person name="Sowa M.E."/>
            <person name="Gygi S.P."/>
        </authorList>
    </citation>
    <scope>IDENTIFICATION BY MASS SPECTROMETRY [LARGE SCALE ANALYSIS]</scope>
    <source>
        <tissue>Brain</tissue>
        <tissue>Heart</tissue>
    </source>
</reference>
<comment type="function">
    <text evidence="1">Allows the formation of correctly charged Gln-tRNA(Gln) through the transamidation of misacylated Glu-tRNA(Gln) in the mitochondria. The reaction takes place in the presence of glutamine and ATP through an activated gamma-phospho-Glu-tRNA(Gln).</text>
</comment>
<comment type="catalytic activity">
    <reaction evidence="1">
        <text>L-glutamyl-tRNA(Gln) + L-glutamine + ATP + H2O = L-glutaminyl-tRNA(Gln) + L-glutamate + ADP + phosphate + H(+)</text>
        <dbReference type="Rhea" id="RHEA:17521"/>
        <dbReference type="Rhea" id="RHEA-COMP:9681"/>
        <dbReference type="Rhea" id="RHEA-COMP:9684"/>
        <dbReference type="ChEBI" id="CHEBI:15377"/>
        <dbReference type="ChEBI" id="CHEBI:15378"/>
        <dbReference type="ChEBI" id="CHEBI:29985"/>
        <dbReference type="ChEBI" id="CHEBI:30616"/>
        <dbReference type="ChEBI" id="CHEBI:43474"/>
        <dbReference type="ChEBI" id="CHEBI:58359"/>
        <dbReference type="ChEBI" id="CHEBI:78520"/>
        <dbReference type="ChEBI" id="CHEBI:78521"/>
        <dbReference type="ChEBI" id="CHEBI:456216"/>
        <dbReference type="EC" id="6.3.5.7"/>
    </reaction>
</comment>
<comment type="subunit">
    <text evidence="1">Subunit of the heterotrimeric GatCAB amidotransferase (AdT) complex, composed of A (QRSL1), B (GATB) and C (GATC) subunits.</text>
</comment>
<comment type="subcellular location">
    <subcellularLocation>
        <location evidence="1">Mitochondrion</location>
    </subcellularLocation>
</comment>
<comment type="similarity">
    <text evidence="1">Belongs to the amidase family. GatA subfamily.</text>
</comment>
<sequence>MLGRTLREVSAALKQGQVTPTELCKNCLSLIKKTKYLNAYITVSEEVALKQAEESEKRYKQGQSLGDLDGIPVAVKDNFSTTGIETTCASNMLKGYVPPYNATVVQKLLDQGALLMGKTNLDEFAMGSGSTDGVFGPVRNPWTYSKQYRERSRQDAGDDSHWLITGGSSGGSAAAVAAFTCFAALGSDTGGSTRNPAAHCGIVGFKPSYGLVSRHGLIPLVNSMDVPGILTRCVDDTAIVLGTLAGHDPKDSTTVRNPAQPASVPGGMDVSRLCIGIPKEYLVPELSSEVRSLWSQAADLFESEGAKVIEVSLPHTCYSIVCYHVLCTSEVASNMARFDGLQYGHRSGVDVSTEAMYAATRQEGFNDVVRGRILSGNFFLLKENYENYFVKAQKVRRLIVKDFVDVFESGVDVLLTPTTLTEAVPYLEFIKEDNRTRSAQDDIFTQAVNMAGLPAVSVPVALSNQGLPIGLQLIGRAFCDQQLLTVAKWFEKQVQFPVIQLQGLMDDGSLVLENGKLTSASLTQR</sequence>
<gene>
    <name type="primary">Qrsl1</name>
</gene>
<organism>
    <name type="scientific">Mus musculus</name>
    <name type="common">Mouse</name>
    <dbReference type="NCBI Taxonomy" id="10090"/>
    <lineage>
        <taxon>Eukaryota</taxon>
        <taxon>Metazoa</taxon>
        <taxon>Chordata</taxon>
        <taxon>Craniata</taxon>
        <taxon>Vertebrata</taxon>
        <taxon>Euteleostomi</taxon>
        <taxon>Mammalia</taxon>
        <taxon>Eutheria</taxon>
        <taxon>Euarchontoglires</taxon>
        <taxon>Glires</taxon>
        <taxon>Rodentia</taxon>
        <taxon>Myomorpha</taxon>
        <taxon>Muroidea</taxon>
        <taxon>Muridae</taxon>
        <taxon>Murinae</taxon>
        <taxon>Mus</taxon>
        <taxon>Mus</taxon>
    </lineage>
</organism>
<proteinExistence type="evidence at protein level"/>
<keyword id="KW-0067">ATP-binding</keyword>
<keyword id="KW-0436">Ligase</keyword>
<keyword id="KW-0496">Mitochondrion</keyword>
<keyword id="KW-0547">Nucleotide-binding</keyword>
<keyword id="KW-0648">Protein biosynthesis</keyword>
<keyword id="KW-1185">Reference proteome</keyword>
<name>GATA_MOUSE</name>
<accession>Q9CZN8</accession>
<accession>Q3TDF6</accession>
<accession>Q6NS53</accession>
<protein>
    <recommendedName>
        <fullName evidence="1">Glutamyl-tRNA(Gln) amidotransferase subunit A, mitochondrial</fullName>
        <shortName evidence="1">Glu-AdT subunit A</shortName>
        <ecNumber evidence="1">6.3.5.7</ecNumber>
    </recommendedName>
    <alternativeName>
        <fullName evidence="1">Glutaminyl-tRNA synthase-like protein 1</fullName>
    </alternativeName>
</protein>
<evidence type="ECO:0000255" key="1">
    <source>
        <dbReference type="HAMAP-Rule" id="MF_03150"/>
    </source>
</evidence>
<evidence type="ECO:0000305" key="2"/>
<dbReference type="EC" id="6.3.5.7" evidence="1"/>
<dbReference type="EMBL" id="AK012351">
    <property type="protein sequence ID" value="BAB28181.1"/>
    <property type="molecule type" value="mRNA"/>
</dbReference>
<dbReference type="EMBL" id="AK170225">
    <property type="protein sequence ID" value="BAE41646.1"/>
    <property type="molecule type" value="mRNA"/>
</dbReference>
<dbReference type="EMBL" id="BC070459">
    <property type="protein sequence ID" value="AAH70459.1"/>
    <property type="molecule type" value="mRNA"/>
</dbReference>
<dbReference type="CCDS" id="CCDS35894.1"/>
<dbReference type="RefSeq" id="NP_001074523.1">
    <property type="nucleotide sequence ID" value="NM_001081054.2"/>
</dbReference>
<dbReference type="SMR" id="Q9CZN8"/>
<dbReference type="BioGRID" id="218178">
    <property type="interactions" value="4"/>
</dbReference>
<dbReference type="FunCoup" id="Q9CZN8">
    <property type="interactions" value="1388"/>
</dbReference>
<dbReference type="STRING" id="10090.ENSMUSP00000020012"/>
<dbReference type="ChEMBL" id="CHEMBL3259494"/>
<dbReference type="GlyGen" id="Q9CZN8">
    <property type="glycosylation" value="1 site, 1 N-linked glycan (1 site)"/>
</dbReference>
<dbReference type="PhosphoSitePlus" id="Q9CZN8"/>
<dbReference type="PaxDb" id="10090-ENSMUSP00000020012"/>
<dbReference type="PeptideAtlas" id="Q9CZN8"/>
<dbReference type="ProteomicsDB" id="265728"/>
<dbReference type="Pumba" id="Q9CZN8"/>
<dbReference type="Antibodypedia" id="32156">
    <property type="antibodies" value="148 antibodies from 22 providers"/>
</dbReference>
<dbReference type="Ensembl" id="ENSMUST00000020012.7">
    <property type="protein sequence ID" value="ENSMUSP00000020012.7"/>
    <property type="gene ID" value="ENSMUSG00000019863.8"/>
</dbReference>
<dbReference type="GeneID" id="76563"/>
<dbReference type="KEGG" id="mmu:76563"/>
<dbReference type="UCSC" id="uc007ezn.1">
    <property type="organism name" value="mouse"/>
</dbReference>
<dbReference type="AGR" id="MGI:1923813"/>
<dbReference type="CTD" id="55278"/>
<dbReference type="MGI" id="MGI:1923813">
    <property type="gene designation" value="Qrsl1"/>
</dbReference>
<dbReference type="VEuPathDB" id="HostDB:ENSMUSG00000019863"/>
<dbReference type="eggNOG" id="KOG1211">
    <property type="taxonomic scope" value="Eukaryota"/>
</dbReference>
<dbReference type="GeneTree" id="ENSGT00550000074866"/>
<dbReference type="HOGENOM" id="CLU_009600_7_6_1"/>
<dbReference type="InParanoid" id="Q9CZN8"/>
<dbReference type="OMA" id="QPASYCG"/>
<dbReference type="OrthoDB" id="421993at2759"/>
<dbReference type="PhylomeDB" id="Q9CZN8"/>
<dbReference type="TreeFam" id="TF313766"/>
<dbReference type="BRENDA" id="6.3.5.7">
    <property type="organism ID" value="3474"/>
</dbReference>
<dbReference type="BioGRID-ORCS" id="76563">
    <property type="hits" value="31 hits in 78 CRISPR screens"/>
</dbReference>
<dbReference type="ChiTaRS" id="Qrsl1">
    <property type="organism name" value="mouse"/>
</dbReference>
<dbReference type="PRO" id="PR:Q9CZN8"/>
<dbReference type="Proteomes" id="UP000000589">
    <property type="component" value="Chromosome 10"/>
</dbReference>
<dbReference type="RNAct" id="Q9CZN8">
    <property type="molecule type" value="protein"/>
</dbReference>
<dbReference type="Bgee" id="ENSMUSG00000019863">
    <property type="expression patterns" value="Expressed in metanephric renal vesicle and 248 other cell types or tissues"/>
</dbReference>
<dbReference type="GO" id="GO:0030956">
    <property type="term" value="C:glutamyl-tRNA(Gln) amidotransferase complex"/>
    <property type="evidence" value="ECO:0007669"/>
    <property type="project" value="UniProtKB-UniRule"/>
</dbReference>
<dbReference type="GO" id="GO:0005739">
    <property type="term" value="C:mitochondrion"/>
    <property type="evidence" value="ECO:0000314"/>
    <property type="project" value="MGI"/>
</dbReference>
<dbReference type="GO" id="GO:0005524">
    <property type="term" value="F:ATP binding"/>
    <property type="evidence" value="ECO:0007669"/>
    <property type="project" value="UniProtKB-KW"/>
</dbReference>
<dbReference type="GO" id="GO:0050567">
    <property type="term" value="F:glutaminyl-tRNA synthase (glutamine-hydrolyzing) activity"/>
    <property type="evidence" value="ECO:0007669"/>
    <property type="project" value="UniProtKB-UniRule"/>
</dbReference>
<dbReference type="GO" id="GO:0070681">
    <property type="term" value="P:glutaminyl-tRNAGln biosynthesis via transamidation"/>
    <property type="evidence" value="ECO:0007669"/>
    <property type="project" value="UniProtKB-UniRule"/>
</dbReference>
<dbReference type="GO" id="GO:0032543">
    <property type="term" value="P:mitochondrial translation"/>
    <property type="evidence" value="ECO:0000315"/>
    <property type="project" value="MGI"/>
</dbReference>
<dbReference type="GO" id="GO:0031647">
    <property type="term" value="P:regulation of protein stability"/>
    <property type="evidence" value="ECO:0000315"/>
    <property type="project" value="MGI"/>
</dbReference>
<dbReference type="FunFam" id="3.90.1300.10:FF:000002">
    <property type="entry name" value="Glutamyl-tRNA(Gln) amidotransferase subunit A, mitochondrial"/>
    <property type="match status" value="1"/>
</dbReference>
<dbReference type="Gene3D" id="3.90.1300.10">
    <property type="entry name" value="Amidase signature (AS) domain"/>
    <property type="match status" value="1"/>
</dbReference>
<dbReference type="HAMAP" id="MF_00120">
    <property type="entry name" value="GatA"/>
    <property type="match status" value="1"/>
</dbReference>
<dbReference type="InterPro" id="IPR000120">
    <property type="entry name" value="Amidase"/>
</dbReference>
<dbReference type="InterPro" id="IPR023631">
    <property type="entry name" value="Amidase_dom"/>
</dbReference>
<dbReference type="InterPro" id="IPR036928">
    <property type="entry name" value="AS_sf"/>
</dbReference>
<dbReference type="InterPro" id="IPR004412">
    <property type="entry name" value="GatA"/>
</dbReference>
<dbReference type="NCBIfam" id="TIGR00132">
    <property type="entry name" value="gatA"/>
    <property type="match status" value="1"/>
</dbReference>
<dbReference type="PANTHER" id="PTHR11895:SF7">
    <property type="entry name" value="GLUTAMYL-TRNA(GLN) AMIDOTRANSFERASE SUBUNIT A, MITOCHONDRIAL"/>
    <property type="match status" value="1"/>
</dbReference>
<dbReference type="PANTHER" id="PTHR11895">
    <property type="entry name" value="TRANSAMIDASE"/>
    <property type="match status" value="1"/>
</dbReference>
<dbReference type="Pfam" id="PF01425">
    <property type="entry name" value="Amidase"/>
    <property type="match status" value="1"/>
</dbReference>
<dbReference type="SUPFAM" id="SSF75304">
    <property type="entry name" value="Amidase signature (AS) enzymes"/>
    <property type="match status" value="1"/>
</dbReference>